<organism>
    <name type="scientific">Shewanella denitrificans (strain OS217 / ATCC BAA-1090 / DSM 15013)</name>
    <dbReference type="NCBI Taxonomy" id="318161"/>
    <lineage>
        <taxon>Bacteria</taxon>
        <taxon>Pseudomonadati</taxon>
        <taxon>Pseudomonadota</taxon>
        <taxon>Gammaproteobacteria</taxon>
        <taxon>Alteromonadales</taxon>
        <taxon>Shewanellaceae</taxon>
        <taxon>Shewanella</taxon>
    </lineage>
</organism>
<sequence length="428" mass="45830">MKQLHLEPIACIDGEINIPGSKSISNRALLLATLAKGTTTLTNLLDSDDIRYMLASLEQLGVQFELSDDKTRCTVQGMGGAVSASTAQTLFLGNAGTAMRPLCAALTLGQGEFTLTGEPRMEERPIGDLVDALRQLGASVTYLKNDGFPPLTINATGLNGGDVDIAGDLSSQFLTALLMVAPLAKGKVNINIKGELVSKPYIDITLALMAQFGVDVQNHDYARFEINPGQQYLSPGKVLVEGDASSASYFLAAGAIAGGSVKVTGVGRLSIQGDVKFADALEKMGADIEWGDDFIIARSAKLSGIDMDMNHIPDAAMTIATAALFAEGETCLRNIYNWRIKETDRLHAMATELRKVGAVVEEGHDFIRITPPVKMNTAAIDTYNDHRMAMCFSLLAFADCGITINDPDCTSKTFPSYFAEFARLTQEA</sequence>
<reference key="1">
    <citation type="submission" date="2006-03" db="EMBL/GenBank/DDBJ databases">
        <title>Complete sequence of Shewanella denitrificans OS217.</title>
        <authorList>
            <consortium name="US DOE Joint Genome Institute"/>
            <person name="Copeland A."/>
            <person name="Lucas S."/>
            <person name="Lapidus A."/>
            <person name="Barry K."/>
            <person name="Detter J.C."/>
            <person name="Glavina del Rio T."/>
            <person name="Hammon N."/>
            <person name="Israni S."/>
            <person name="Dalin E."/>
            <person name="Tice H."/>
            <person name="Pitluck S."/>
            <person name="Brettin T."/>
            <person name="Bruce D."/>
            <person name="Han C."/>
            <person name="Tapia R."/>
            <person name="Gilna P."/>
            <person name="Kiss H."/>
            <person name="Schmutz J."/>
            <person name="Larimer F."/>
            <person name="Land M."/>
            <person name="Hauser L."/>
            <person name="Kyrpides N."/>
            <person name="Lykidis A."/>
            <person name="Richardson P."/>
        </authorList>
    </citation>
    <scope>NUCLEOTIDE SEQUENCE [LARGE SCALE GENOMIC DNA]</scope>
    <source>
        <strain>OS217 / ATCC BAA-1090 / DSM 15013</strain>
    </source>
</reference>
<accession>Q12NE1</accession>
<dbReference type="EC" id="2.5.1.19" evidence="1"/>
<dbReference type="EMBL" id="CP000302">
    <property type="protein sequence ID" value="ABE55035.1"/>
    <property type="molecule type" value="Genomic_DNA"/>
</dbReference>
<dbReference type="RefSeq" id="WP_011496192.1">
    <property type="nucleotide sequence ID" value="NC_007954.1"/>
</dbReference>
<dbReference type="SMR" id="Q12NE1"/>
<dbReference type="STRING" id="318161.Sden_1751"/>
<dbReference type="KEGG" id="sdn:Sden_1751"/>
<dbReference type="eggNOG" id="COG0128">
    <property type="taxonomic scope" value="Bacteria"/>
</dbReference>
<dbReference type="HOGENOM" id="CLU_024321_0_0_6"/>
<dbReference type="OrthoDB" id="9809920at2"/>
<dbReference type="UniPathway" id="UPA00053">
    <property type="reaction ID" value="UER00089"/>
</dbReference>
<dbReference type="Proteomes" id="UP000001982">
    <property type="component" value="Chromosome"/>
</dbReference>
<dbReference type="GO" id="GO:0005737">
    <property type="term" value="C:cytoplasm"/>
    <property type="evidence" value="ECO:0007669"/>
    <property type="project" value="UniProtKB-SubCell"/>
</dbReference>
<dbReference type="GO" id="GO:0003866">
    <property type="term" value="F:3-phosphoshikimate 1-carboxyvinyltransferase activity"/>
    <property type="evidence" value="ECO:0007669"/>
    <property type="project" value="UniProtKB-UniRule"/>
</dbReference>
<dbReference type="GO" id="GO:0008652">
    <property type="term" value="P:amino acid biosynthetic process"/>
    <property type="evidence" value="ECO:0007669"/>
    <property type="project" value="UniProtKB-KW"/>
</dbReference>
<dbReference type="GO" id="GO:0009073">
    <property type="term" value="P:aromatic amino acid family biosynthetic process"/>
    <property type="evidence" value="ECO:0007669"/>
    <property type="project" value="UniProtKB-KW"/>
</dbReference>
<dbReference type="GO" id="GO:0009423">
    <property type="term" value="P:chorismate biosynthetic process"/>
    <property type="evidence" value="ECO:0007669"/>
    <property type="project" value="UniProtKB-UniRule"/>
</dbReference>
<dbReference type="CDD" id="cd01556">
    <property type="entry name" value="EPSP_synthase"/>
    <property type="match status" value="1"/>
</dbReference>
<dbReference type="FunFam" id="3.65.10.10:FF:000003">
    <property type="entry name" value="3-phosphoshikimate 1-carboxyvinyltransferase"/>
    <property type="match status" value="1"/>
</dbReference>
<dbReference type="FunFam" id="3.65.10.10:FF:000004">
    <property type="entry name" value="3-phosphoshikimate 1-carboxyvinyltransferase"/>
    <property type="match status" value="1"/>
</dbReference>
<dbReference type="Gene3D" id="3.65.10.10">
    <property type="entry name" value="Enolpyruvate transferase domain"/>
    <property type="match status" value="2"/>
</dbReference>
<dbReference type="HAMAP" id="MF_00210">
    <property type="entry name" value="EPSP_synth"/>
    <property type="match status" value="1"/>
</dbReference>
<dbReference type="InterPro" id="IPR001986">
    <property type="entry name" value="Enolpyruvate_Tfrase_dom"/>
</dbReference>
<dbReference type="InterPro" id="IPR036968">
    <property type="entry name" value="Enolpyruvate_Tfrase_sf"/>
</dbReference>
<dbReference type="InterPro" id="IPR006264">
    <property type="entry name" value="EPSP_synthase"/>
</dbReference>
<dbReference type="InterPro" id="IPR023193">
    <property type="entry name" value="EPSP_synthase_CS"/>
</dbReference>
<dbReference type="InterPro" id="IPR013792">
    <property type="entry name" value="RNA3'P_cycl/enolpyr_Trfase_a/b"/>
</dbReference>
<dbReference type="NCBIfam" id="TIGR01356">
    <property type="entry name" value="aroA"/>
    <property type="match status" value="1"/>
</dbReference>
<dbReference type="PANTHER" id="PTHR21090">
    <property type="entry name" value="AROM/DEHYDROQUINATE SYNTHASE"/>
    <property type="match status" value="1"/>
</dbReference>
<dbReference type="PANTHER" id="PTHR21090:SF5">
    <property type="entry name" value="PENTAFUNCTIONAL AROM POLYPEPTIDE"/>
    <property type="match status" value="1"/>
</dbReference>
<dbReference type="Pfam" id="PF00275">
    <property type="entry name" value="EPSP_synthase"/>
    <property type="match status" value="1"/>
</dbReference>
<dbReference type="PIRSF" id="PIRSF000505">
    <property type="entry name" value="EPSPS"/>
    <property type="match status" value="1"/>
</dbReference>
<dbReference type="SUPFAM" id="SSF55205">
    <property type="entry name" value="EPT/RTPC-like"/>
    <property type="match status" value="1"/>
</dbReference>
<dbReference type="PROSITE" id="PS00104">
    <property type="entry name" value="EPSP_SYNTHASE_1"/>
    <property type="match status" value="1"/>
</dbReference>
<dbReference type="PROSITE" id="PS00885">
    <property type="entry name" value="EPSP_SYNTHASE_2"/>
    <property type="match status" value="1"/>
</dbReference>
<keyword id="KW-0028">Amino-acid biosynthesis</keyword>
<keyword id="KW-0057">Aromatic amino acid biosynthesis</keyword>
<keyword id="KW-0963">Cytoplasm</keyword>
<keyword id="KW-1185">Reference proteome</keyword>
<keyword id="KW-0808">Transferase</keyword>
<name>AROA_SHEDO</name>
<protein>
    <recommendedName>
        <fullName evidence="1">3-phosphoshikimate 1-carboxyvinyltransferase</fullName>
        <ecNumber evidence="1">2.5.1.19</ecNumber>
    </recommendedName>
    <alternativeName>
        <fullName evidence="1">5-enolpyruvylshikimate-3-phosphate synthase</fullName>
        <shortName evidence="1">EPSP synthase</shortName>
        <shortName evidence="1">EPSPS</shortName>
    </alternativeName>
</protein>
<evidence type="ECO:0000255" key="1">
    <source>
        <dbReference type="HAMAP-Rule" id="MF_00210"/>
    </source>
</evidence>
<proteinExistence type="inferred from homology"/>
<feature type="chain" id="PRO_1000012470" description="3-phosphoshikimate 1-carboxyvinyltransferase">
    <location>
        <begin position="1"/>
        <end position="428"/>
    </location>
</feature>
<feature type="active site" description="Proton acceptor" evidence="1">
    <location>
        <position position="314"/>
    </location>
</feature>
<feature type="binding site" evidence="1">
    <location>
        <position position="22"/>
    </location>
    <ligand>
        <name>3-phosphoshikimate</name>
        <dbReference type="ChEBI" id="CHEBI:145989"/>
    </ligand>
</feature>
<feature type="binding site" evidence="1">
    <location>
        <position position="22"/>
    </location>
    <ligand>
        <name>phosphoenolpyruvate</name>
        <dbReference type="ChEBI" id="CHEBI:58702"/>
    </ligand>
</feature>
<feature type="binding site" evidence="1">
    <location>
        <position position="23"/>
    </location>
    <ligand>
        <name>3-phosphoshikimate</name>
        <dbReference type="ChEBI" id="CHEBI:145989"/>
    </ligand>
</feature>
<feature type="binding site" evidence="1">
    <location>
        <position position="27"/>
    </location>
    <ligand>
        <name>3-phosphoshikimate</name>
        <dbReference type="ChEBI" id="CHEBI:145989"/>
    </ligand>
</feature>
<feature type="binding site" evidence="1">
    <location>
        <position position="96"/>
    </location>
    <ligand>
        <name>phosphoenolpyruvate</name>
        <dbReference type="ChEBI" id="CHEBI:58702"/>
    </ligand>
</feature>
<feature type="binding site" evidence="1">
    <location>
        <position position="124"/>
    </location>
    <ligand>
        <name>phosphoenolpyruvate</name>
        <dbReference type="ChEBI" id="CHEBI:58702"/>
    </ligand>
</feature>
<feature type="binding site" evidence="1">
    <location>
        <position position="170"/>
    </location>
    <ligand>
        <name>3-phosphoshikimate</name>
        <dbReference type="ChEBI" id="CHEBI:145989"/>
    </ligand>
</feature>
<feature type="binding site" evidence="1">
    <location>
        <position position="171"/>
    </location>
    <ligand>
        <name>3-phosphoshikimate</name>
        <dbReference type="ChEBI" id="CHEBI:145989"/>
    </ligand>
</feature>
<feature type="binding site" evidence="1">
    <location>
        <position position="172"/>
    </location>
    <ligand>
        <name>3-phosphoshikimate</name>
        <dbReference type="ChEBI" id="CHEBI:145989"/>
    </ligand>
</feature>
<feature type="binding site" evidence="1">
    <location>
        <position position="172"/>
    </location>
    <ligand>
        <name>phosphoenolpyruvate</name>
        <dbReference type="ChEBI" id="CHEBI:58702"/>
    </ligand>
</feature>
<feature type="binding site" evidence="1">
    <location>
        <position position="198"/>
    </location>
    <ligand>
        <name>3-phosphoshikimate</name>
        <dbReference type="ChEBI" id="CHEBI:145989"/>
    </ligand>
</feature>
<feature type="binding site" evidence="1">
    <location>
        <position position="314"/>
    </location>
    <ligand>
        <name>3-phosphoshikimate</name>
        <dbReference type="ChEBI" id="CHEBI:145989"/>
    </ligand>
</feature>
<feature type="binding site" evidence="1">
    <location>
        <position position="337"/>
    </location>
    <ligand>
        <name>3-phosphoshikimate</name>
        <dbReference type="ChEBI" id="CHEBI:145989"/>
    </ligand>
</feature>
<feature type="binding site" evidence="1">
    <location>
        <position position="341"/>
    </location>
    <ligand>
        <name>3-phosphoshikimate</name>
        <dbReference type="ChEBI" id="CHEBI:145989"/>
    </ligand>
</feature>
<feature type="binding site" evidence="1">
    <location>
        <position position="345"/>
    </location>
    <ligand>
        <name>phosphoenolpyruvate</name>
        <dbReference type="ChEBI" id="CHEBI:58702"/>
    </ligand>
</feature>
<feature type="binding site" evidence="1">
    <location>
        <position position="387"/>
    </location>
    <ligand>
        <name>phosphoenolpyruvate</name>
        <dbReference type="ChEBI" id="CHEBI:58702"/>
    </ligand>
</feature>
<feature type="binding site" evidence="1">
    <location>
        <position position="412"/>
    </location>
    <ligand>
        <name>phosphoenolpyruvate</name>
        <dbReference type="ChEBI" id="CHEBI:58702"/>
    </ligand>
</feature>
<gene>
    <name evidence="1" type="primary">aroA</name>
    <name type="ordered locus">Sden_1751</name>
</gene>
<comment type="function">
    <text evidence="1">Catalyzes the transfer of the enolpyruvyl moiety of phosphoenolpyruvate (PEP) to the 5-hydroxyl of shikimate-3-phosphate (S3P) to produce enolpyruvyl shikimate-3-phosphate and inorganic phosphate.</text>
</comment>
<comment type="catalytic activity">
    <reaction evidence="1">
        <text>3-phosphoshikimate + phosphoenolpyruvate = 5-O-(1-carboxyvinyl)-3-phosphoshikimate + phosphate</text>
        <dbReference type="Rhea" id="RHEA:21256"/>
        <dbReference type="ChEBI" id="CHEBI:43474"/>
        <dbReference type="ChEBI" id="CHEBI:57701"/>
        <dbReference type="ChEBI" id="CHEBI:58702"/>
        <dbReference type="ChEBI" id="CHEBI:145989"/>
        <dbReference type="EC" id="2.5.1.19"/>
    </reaction>
    <physiologicalReaction direction="left-to-right" evidence="1">
        <dbReference type="Rhea" id="RHEA:21257"/>
    </physiologicalReaction>
</comment>
<comment type="pathway">
    <text evidence="1">Metabolic intermediate biosynthesis; chorismate biosynthesis; chorismate from D-erythrose 4-phosphate and phosphoenolpyruvate: step 6/7.</text>
</comment>
<comment type="subunit">
    <text evidence="1">Monomer.</text>
</comment>
<comment type="subcellular location">
    <subcellularLocation>
        <location evidence="1">Cytoplasm</location>
    </subcellularLocation>
</comment>
<comment type="similarity">
    <text evidence="1">Belongs to the EPSP synthase family.</text>
</comment>